<evidence type="ECO:0000255" key="1">
    <source>
        <dbReference type="HAMAP-Rule" id="MF_00194"/>
    </source>
</evidence>
<gene>
    <name evidence="1" type="primary">rdgC</name>
    <name type="ordered locus">VV0722</name>
</gene>
<organism>
    <name type="scientific">Vibrio vulnificus (strain YJ016)</name>
    <dbReference type="NCBI Taxonomy" id="196600"/>
    <lineage>
        <taxon>Bacteria</taxon>
        <taxon>Pseudomonadati</taxon>
        <taxon>Pseudomonadota</taxon>
        <taxon>Gammaproteobacteria</taxon>
        <taxon>Vibrionales</taxon>
        <taxon>Vibrionaceae</taxon>
        <taxon>Vibrio</taxon>
    </lineage>
</organism>
<reference key="1">
    <citation type="journal article" date="2003" name="Genome Res.">
        <title>Comparative genome analysis of Vibrio vulnificus, a marine pathogen.</title>
        <authorList>
            <person name="Chen C.-Y."/>
            <person name="Wu K.-M."/>
            <person name="Chang Y.-C."/>
            <person name="Chang C.-H."/>
            <person name="Tsai H.-C."/>
            <person name="Liao T.-L."/>
            <person name="Liu Y.-M."/>
            <person name="Chen H.-J."/>
            <person name="Shen A.B.-T."/>
            <person name="Li J.-C."/>
            <person name="Su T.-L."/>
            <person name="Shao C.-P."/>
            <person name="Lee C.-T."/>
            <person name="Hor L.-I."/>
            <person name="Tsai S.-F."/>
        </authorList>
    </citation>
    <scope>NUCLEOTIDE SEQUENCE [LARGE SCALE GENOMIC DNA]</scope>
    <source>
        <strain>YJ016</strain>
    </source>
</reference>
<sequence length="304" mass="34481">MWFKNCMVYRVNREIEFNADQLEKQLAEFRYTPCGSQDKQKFGWVSAMGRHGDMMTHVSEDRILICAKKEEKMLPASVIKESLNTKVEAMEAQEGRPLKKKEKETLKEEIIIDLLPRAFSRSNHTYVLILPKEGFILVDASSYKKAEDVLALLRKTMGSLPVVPAIPEKAVETTLTEWVKTGQTPQGFHLLDEAELKSVLEDGGIIRCKKQELTSDEILSHIAADKVVTKLALNWQERLEFVLADDASIKRLKFSDELRDQNDDIPREDQAARFDADFSLMCGELSAFLPNLFQALGGLPHPNA</sequence>
<keyword id="KW-0963">Cytoplasm</keyword>
<keyword id="KW-0233">DNA recombination</keyword>
<proteinExistence type="inferred from homology"/>
<feature type="chain" id="PRO_0000211755" description="Recombination-associated protein RdgC">
    <location>
        <begin position="1"/>
        <end position="304"/>
    </location>
</feature>
<comment type="function">
    <text evidence="1">May be involved in recombination.</text>
</comment>
<comment type="subcellular location">
    <subcellularLocation>
        <location evidence="1">Cytoplasm</location>
        <location evidence="1">Nucleoid</location>
    </subcellularLocation>
</comment>
<comment type="similarity">
    <text evidence="1">Belongs to the RdgC family.</text>
</comment>
<dbReference type="EMBL" id="BA000037">
    <property type="protein sequence ID" value="BAC93486.1"/>
    <property type="molecule type" value="Genomic_DNA"/>
</dbReference>
<dbReference type="RefSeq" id="WP_011149579.1">
    <property type="nucleotide sequence ID" value="NC_005139.1"/>
</dbReference>
<dbReference type="SMR" id="Q7MNJ5"/>
<dbReference type="STRING" id="672.VV93_v1c06690"/>
<dbReference type="KEGG" id="vvy:VV0722"/>
<dbReference type="PATRIC" id="fig|196600.6.peg.739"/>
<dbReference type="eggNOG" id="COG2974">
    <property type="taxonomic scope" value="Bacteria"/>
</dbReference>
<dbReference type="HOGENOM" id="CLU_052038_1_1_6"/>
<dbReference type="Proteomes" id="UP000002675">
    <property type="component" value="Chromosome I"/>
</dbReference>
<dbReference type="GO" id="GO:0043590">
    <property type="term" value="C:bacterial nucleoid"/>
    <property type="evidence" value="ECO:0007669"/>
    <property type="project" value="TreeGrafter"/>
</dbReference>
<dbReference type="GO" id="GO:0005737">
    <property type="term" value="C:cytoplasm"/>
    <property type="evidence" value="ECO:0007669"/>
    <property type="project" value="UniProtKB-UniRule"/>
</dbReference>
<dbReference type="GO" id="GO:0003690">
    <property type="term" value="F:double-stranded DNA binding"/>
    <property type="evidence" value="ECO:0007669"/>
    <property type="project" value="TreeGrafter"/>
</dbReference>
<dbReference type="GO" id="GO:0006310">
    <property type="term" value="P:DNA recombination"/>
    <property type="evidence" value="ECO:0007669"/>
    <property type="project" value="UniProtKB-UniRule"/>
</dbReference>
<dbReference type="GO" id="GO:0000018">
    <property type="term" value="P:regulation of DNA recombination"/>
    <property type="evidence" value="ECO:0007669"/>
    <property type="project" value="TreeGrafter"/>
</dbReference>
<dbReference type="HAMAP" id="MF_00194">
    <property type="entry name" value="RdgC"/>
    <property type="match status" value="1"/>
</dbReference>
<dbReference type="InterPro" id="IPR007476">
    <property type="entry name" value="RdgC"/>
</dbReference>
<dbReference type="NCBIfam" id="NF001462">
    <property type="entry name" value="PRK00321.1-3"/>
    <property type="match status" value="1"/>
</dbReference>
<dbReference type="NCBIfam" id="NF001464">
    <property type="entry name" value="PRK00321.1-5"/>
    <property type="match status" value="1"/>
</dbReference>
<dbReference type="PANTHER" id="PTHR38103">
    <property type="entry name" value="RECOMBINATION-ASSOCIATED PROTEIN RDGC"/>
    <property type="match status" value="1"/>
</dbReference>
<dbReference type="PANTHER" id="PTHR38103:SF1">
    <property type="entry name" value="RECOMBINATION-ASSOCIATED PROTEIN RDGC"/>
    <property type="match status" value="1"/>
</dbReference>
<dbReference type="Pfam" id="PF04381">
    <property type="entry name" value="RdgC"/>
    <property type="match status" value="1"/>
</dbReference>
<accession>Q7MNJ5</accession>
<protein>
    <recommendedName>
        <fullName evidence="1">Recombination-associated protein RdgC</fullName>
    </recommendedName>
</protein>
<name>RDGC_VIBVY</name>